<evidence type="ECO:0000250" key="1"/>
<evidence type="ECO:0000305" key="2"/>
<dbReference type="EC" id="2.7.1.20"/>
<dbReference type="EMBL" id="AF097765">
    <property type="protein sequence ID" value="AAC69199.1"/>
    <property type="molecule type" value="mRNA"/>
</dbReference>
<dbReference type="SMR" id="O93919"/>
<dbReference type="VEuPathDB" id="FungiDB:SCHCODRAFT_02613652"/>
<dbReference type="UniPathway" id="UPA00588">
    <property type="reaction ID" value="UER00659"/>
</dbReference>
<dbReference type="GO" id="GO:0005829">
    <property type="term" value="C:cytosol"/>
    <property type="evidence" value="ECO:0007669"/>
    <property type="project" value="TreeGrafter"/>
</dbReference>
<dbReference type="GO" id="GO:0005634">
    <property type="term" value="C:nucleus"/>
    <property type="evidence" value="ECO:0007669"/>
    <property type="project" value="TreeGrafter"/>
</dbReference>
<dbReference type="GO" id="GO:0004001">
    <property type="term" value="F:adenosine kinase activity"/>
    <property type="evidence" value="ECO:0007669"/>
    <property type="project" value="UniProtKB-EC"/>
</dbReference>
<dbReference type="GO" id="GO:0005524">
    <property type="term" value="F:ATP binding"/>
    <property type="evidence" value="ECO:0007669"/>
    <property type="project" value="UniProtKB-KW"/>
</dbReference>
<dbReference type="GO" id="GO:0044209">
    <property type="term" value="P:AMP salvage"/>
    <property type="evidence" value="ECO:0007669"/>
    <property type="project" value="UniProtKB-UniPathway"/>
</dbReference>
<dbReference type="GO" id="GO:0006144">
    <property type="term" value="P:purine nucleobase metabolic process"/>
    <property type="evidence" value="ECO:0007669"/>
    <property type="project" value="TreeGrafter"/>
</dbReference>
<dbReference type="GO" id="GO:0006166">
    <property type="term" value="P:purine ribonucleoside salvage"/>
    <property type="evidence" value="ECO:0007669"/>
    <property type="project" value="UniProtKB-KW"/>
</dbReference>
<dbReference type="CDD" id="cd01168">
    <property type="entry name" value="adenosine_kinase"/>
    <property type="match status" value="1"/>
</dbReference>
<dbReference type="Gene3D" id="3.30.1110.10">
    <property type="match status" value="1"/>
</dbReference>
<dbReference type="Gene3D" id="3.40.1190.20">
    <property type="match status" value="1"/>
</dbReference>
<dbReference type="InterPro" id="IPR001805">
    <property type="entry name" value="Adenokinase"/>
</dbReference>
<dbReference type="InterPro" id="IPR002173">
    <property type="entry name" value="Carboh/pur_kinase_PfkB_CS"/>
</dbReference>
<dbReference type="InterPro" id="IPR011611">
    <property type="entry name" value="PfkB_dom"/>
</dbReference>
<dbReference type="InterPro" id="IPR029056">
    <property type="entry name" value="Ribokinase-like"/>
</dbReference>
<dbReference type="PANTHER" id="PTHR45769">
    <property type="entry name" value="ADENOSINE KINASE"/>
    <property type="match status" value="1"/>
</dbReference>
<dbReference type="PANTHER" id="PTHR45769:SF3">
    <property type="entry name" value="ADENOSINE KINASE"/>
    <property type="match status" value="1"/>
</dbReference>
<dbReference type="Pfam" id="PF00294">
    <property type="entry name" value="PfkB"/>
    <property type="match status" value="1"/>
</dbReference>
<dbReference type="PRINTS" id="PR00989">
    <property type="entry name" value="ADENOKINASE"/>
</dbReference>
<dbReference type="SUPFAM" id="SSF53613">
    <property type="entry name" value="Ribokinase-like"/>
    <property type="match status" value="1"/>
</dbReference>
<dbReference type="PROSITE" id="PS00584">
    <property type="entry name" value="PFKB_KINASES_2"/>
    <property type="match status" value="1"/>
</dbReference>
<sequence>MSSYKLFCMGNPLLDLQVRDGEKLLEKYGLKSNDAILAEEKHLLLYDEIVKEHEVTYVAGGAAQNAARGAAYCLPPKSVVYTGCVGDDDLAEQLKAANKREGLDEAYLVKKGEKTGACAVIITGHDRSLVTTLRAAEKFEQSHLSSEAVAPLVDAVQFYYMEGYFVTHGLASALELAGKSAAKSKCFVLNFSAPFIPQFFMPAIQQLLPYVDIVIANESEAEAWASASGHPAPTDLAAVAKSLAMQPKTNPARPRVVIFTHGAEETVVVNSAEPGRVRTFKVDKLAEGEIVDTNGAGDAFAGGFLGALVAGRELDDSVEAGHKLAKISIQQIGPQFKWPKVQIL</sequence>
<proteinExistence type="evidence at transcript level"/>
<accession>O93919</accession>
<gene>
    <name type="primary">ADK</name>
</gene>
<name>ADK_SCHCO</name>
<feature type="chain" id="PRO_0000080060" description="Adenosine kinase">
    <location>
        <begin position="1"/>
        <end position="344"/>
    </location>
</feature>
<feature type="active site" evidence="1">
    <location>
        <position position="298"/>
    </location>
</feature>
<comment type="catalytic activity">
    <reaction>
        <text>adenosine + ATP = AMP + ADP + H(+)</text>
        <dbReference type="Rhea" id="RHEA:20824"/>
        <dbReference type="ChEBI" id="CHEBI:15378"/>
        <dbReference type="ChEBI" id="CHEBI:16335"/>
        <dbReference type="ChEBI" id="CHEBI:30616"/>
        <dbReference type="ChEBI" id="CHEBI:456215"/>
        <dbReference type="ChEBI" id="CHEBI:456216"/>
        <dbReference type="EC" id="2.7.1.20"/>
    </reaction>
</comment>
<comment type="cofactor">
    <cofactor evidence="1">
        <name>Mg(2+)</name>
        <dbReference type="ChEBI" id="CHEBI:18420"/>
    </cofactor>
</comment>
<comment type="pathway">
    <text>Purine metabolism; AMP biosynthesis via salvage pathway; AMP from adenosine: step 1/1.</text>
</comment>
<comment type="similarity">
    <text evidence="2">Belongs to the carbohydrate kinase PfkB family.</text>
</comment>
<organism>
    <name type="scientific">Schizophyllum commune</name>
    <name type="common">Split gill fungus</name>
    <dbReference type="NCBI Taxonomy" id="5334"/>
    <lineage>
        <taxon>Eukaryota</taxon>
        <taxon>Fungi</taxon>
        <taxon>Dikarya</taxon>
        <taxon>Basidiomycota</taxon>
        <taxon>Agaricomycotina</taxon>
        <taxon>Agaricomycetes</taxon>
        <taxon>Agaricomycetidae</taxon>
        <taxon>Agaricales</taxon>
        <taxon>Schizophyllaceae</taxon>
        <taxon>Schizophyllum</taxon>
    </lineage>
</organism>
<reference key="1">
    <citation type="submission" date="1998-10" db="EMBL/GenBank/DDBJ databases">
        <authorList>
            <person name="Hittinger C.T."/>
            <person name="Copeland T.K."/>
            <person name="Green A.E."/>
            <person name="Lilly W.W."/>
            <person name="Gathman A.C."/>
        </authorList>
    </citation>
    <scope>NUCLEOTIDE SEQUENCE [MRNA]</scope>
    <source>
        <strain>ATCC 44201 / CBS 340.81 / UVM 4-40 / 4-40</strain>
    </source>
</reference>
<keyword id="KW-0067">ATP-binding</keyword>
<keyword id="KW-0418">Kinase</keyword>
<keyword id="KW-0460">Magnesium</keyword>
<keyword id="KW-0547">Nucleotide-binding</keyword>
<keyword id="KW-0660">Purine salvage</keyword>
<keyword id="KW-0808">Transferase</keyword>
<protein>
    <recommendedName>
        <fullName>Adenosine kinase</fullName>
        <ecNumber>2.7.1.20</ecNumber>
    </recommendedName>
</protein>